<sequence>MKWLKQLQSLHTKLVIVYVLLIIIGMQIIGLYFTNNLEKELLDNFKKNITQYAKQLEISIEKVYDEKGSVNAQKDIQNLLSEYANRQEIGEIRFIDKDQIIIATTKQSNRSLINQKANDSSVQKALSLGQSNDHLILKDYGGGKDRVWVYNIPVKVDKKVIGNIYIESKINDVYNQLNNINQIFIVGTAISLLITVILGFFIARTITKPITDMRNQTVEMSRGNYTQRVKIYGNDEIGELALAFNNLSKRVQEAQANTESEKRRLDSVITHMSDGIIATDRRGRIRIVNDMALKMLGMAKEDIIGYYMLSVLSLEDEFKLEEIQENNDSFLLDLNEEEGLIARVNFSTIVQETGFVTGYIAVLHDVTEQQQVERERREFVANVSHELRTPLTSMNSYIEALEEGAWKDEELAPQFLSVTREETERMIRLVNDLLQLSKMDNESDQINKEIIDFNMFINKIINRHEMSAKDTTFIRDIPKKTIFTEFDPDKMTQVFDNVITNAMKYSRGDKRVEFHVKQNPLYNRMTIRIKDNGIGIPINKVDKIFDRFYRVDKARTRKMGGTGLGLAISKEIVEAHNGRIWANSVEGQGTSIFITLPCEVIEDGDWDE</sequence>
<comment type="function">
    <text evidence="3">Member of the two-component regulatory system WalK/WalR that regulates genes involved in cell wall metabolism, virulence regulation, biofilm production, oxidative stress resistance and antibiotic resistance via direct or indirect regulation of autolysins. Functions as a sensor protein kinase which is autophosphorylated at a histidine residue in the dimerization domain and transfers its phosphate group to the conserved aspartic acid residue in the regulatory domain of WalR. In turn, WalR binds to the upstream promoter regions of the target genes to positively and negatively regulate their expression.</text>
</comment>
<comment type="catalytic activity">
    <reaction evidence="3">
        <text>ATP + protein L-histidine = ADP + protein N-phospho-L-histidine.</text>
        <dbReference type="EC" id="2.7.13.3"/>
    </reaction>
</comment>
<comment type="activity regulation">
    <text evidence="3">By zinc. Zinc-binding negatively regulates WalK kinase activity and thus autophosphorylation.</text>
</comment>
<comment type="subunit">
    <text evidence="2">Forms homodimers. Forms homooligomers.</text>
</comment>
<comment type="subcellular location">
    <subcellularLocation>
        <location evidence="9">Cell membrane</location>
        <topology evidence="4">Multi-pass membrane protein</topology>
    </subcellularLocation>
</comment>
<comment type="PTM">
    <text evidence="3">Autophosphorylated.</text>
</comment>
<protein>
    <recommendedName>
        <fullName evidence="9">Sensor protein kinase WalK</fullName>
        <ecNumber evidence="1">2.7.13.3</ecNumber>
    </recommendedName>
</protein>
<accession>Q7A215</accession>
<feature type="chain" id="PRO_0000353059" description="Sensor protein kinase WalK">
    <location>
        <begin position="1"/>
        <end position="608"/>
    </location>
</feature>
<feature type="transmembrane region" description="Helical" evidence="4">
    <location>
        <begin position="14"/>
        <end position="34"/>
    </location>
</feature>
<feature type="transmembrane region" description="Helical" evidence="4">
    <location>
        <begin position="183"/>
        <end position="203"/>
    </location>
</feature>
<feature type="domain" description="HAMP" evidence="5">
    <location>
        <begin position="204"/>
        <end position="256"/>
    </location>
</feature>
<feature type="domain" description="PAS" evidence="7">
    <location>
        <begin position="261"/>
        <end position="331"/>
    </location>
</feature>
<feature type="domain" description="PAC" evidence="8">
    <location>
        <begin position="314"/>
        <end position="378"/>
    </location>
</feature>
<feature type="domain" description="Histidine kinase" evidence="6">
    <location>
        <begin position="382"/>
        <end position="600"/>
    </location>
</feature>
<feature type="binding site" evidence="3">
    <location>
        <position position="271"/>
    </location>
    <ligand>
        <name>Zn(2+)</name>
        <dbReference type="ChEBI" id="CHEBI:29105"/>
    </ligand>
</feature>
<feature type="binding site" evidence="3">
    <location>
        <position position="274"/>
    </location>
    <ligand>
        <name>Zn(2+)</name>
        <dbReference type="ChEBI" id="CHEBI:29105"/>
    </ligand>
</feature>
<feature type="binding site" evidence="3">
    <location>
        <position position="364"/>
    </location>
    <ligand>
        <name>Zn(2+)</name>
        <dbReference type="ChEBI" id="CHEBI:29105"/>
    </ligand>
</feature>
<feature type="binding site" evidence="3">
    <location>
        <position position="368"/>
    </location>
    <ligand>
        <name>Zn(2+)</name>
        <dbReference type="ChEBI" id="CHEBI:29105"/>
    </ligand>
</feature>
<feature type="modified residue" description="Phosphohistidine; by autocatalysis" evidence="6">
    <location>
        <position position="385"/>
    </location>
</feature>
<gene>
    <name type="primary">walK</name>
    <name type="synonym">vicK</name>
    <name type="ordered locus">MW0019</name>
</gene>
<proteinExistence type="inferred from homology"/>
<organism>
    <name type="scientific">Staphylococcus aureus (strain MW2)</name>
    <dbReference type="NCBI Taxonomy" id="196620"/>
    <lineage>
        <taxon>Bacteria</taxon>
        <taxon>Bacillati</taxon>
        <taxon>Bacillota</taxon>
        <taxon>Bacilli</taxon>
        <taxon>Bacillales</taxon>
        <taxon>Staphylococcaceae</taxon>
        <taxon>Staphylococcus</taxon>
    </lineage>
</organism>
<dbReference type="EC" id="2.7.13.3" evidence="1"/>
<dbReference type="EMBL" id="BA000033">
    <property type="protein sequence ID" value="BAB93884.1"/>
    <property type="molecule type" value="Genomic_DNA"/>
</dbReference>
<dbReference type="RefSeq" id="WP_000871607.1">
    <property type="nucleotide sequence ID" value="NC_003923.1"/>
</dbReference>
<dbReference type="SMR" id="Q7A215"/>
<dbReference type="KEGG" id="sam:MW0019"/>
<dbReference type="HOGENOM" id="CLU_000445_89_2_9"/>
<dbReference type="GO" id="GO:0005886">
    <property type="term" value="C:plasma membrane"/>
    <property type="evidence" value="ECO:0007669"/>
    <property type="project" value="UniProtKB-SubCell"/>
</dbReference>
<dbReference type="GO" id="GO:0005524">
    <property type="term" value="F:ATP binding"/>
    <property type="evidence" value="ECO:0007669"/>
    <property type="project" value="UniProtKB-KW"/>
</dbReference>
<dbReference type="GO" id="GO:0046872">
    <property type="term" value="F:metal ion binding"/>
    <property type="evidence" value="ECO:0007669"/>
    <property type="project" value="UniProtKB-KW"/>
</dbReference>
<dbReference type="GO" id="GO:0000156">
    <property type="term" value="F:phosphorelay response regulator activity"/>
    <property type="evidence" value="ECO:0007669"/>
    <property type="project" value="TreeGrafter"/>
</dbReference>
<dbReference type="GO" id="GO:0000155">
    <property type="term" value="F:phosphorelay sensor kinase activity"/>
    <property type="evidence" value="ECO:0007669"/>
    <property type="project" value="InterPro"/>
</dbReference>
<dbReference type="GO" id="GO:0030295">
    <property type="term" value="F:protein kinase activator activity"/>
    <property type="evidence" value="ECO:0007669"/>
    <property type="project" value="TreeGrafter"/>
</dbReference>
<dbReference type="GO" id="GO:0007234">
    <property type="term" value="P:osmosensory signaling via phosphorelay pathway"/>
    <property type="evidence" value="ECO:0007669"/>
    <property type="project" value="TreeGrafter"/>
</dbReference>
<dbReference type="CDD" id="cd06225">
    <property type="entry name" value="HAMP"/>
    <property type="match status" value="1"/>
</dbReference>
<dbReference type="CDD" id="cd00075">
    <property type="entry name" value="HATPase"/>
    <property type="match status" value="1"/>
</dbReference>
<dbReference type="CDD" id="cd00082">
    <property type="entry name" value="HisKA"/>
    <property type="match status" value="1"/>
</dbReference>
<dbReference type="CDD" id="cd00130">
    <property type="entry name" value="PAS"/>
    <property type="match status" value="1"/>
</dbReference>
<dbReference type="FunFam" id="1.10.8.500:FF:000001">
    <property type="entry name" value="Cell wall metabolism sensor histidine kinase"/>
    <property type="match status" value="1"/>
</dbReference>
<dbReference type="FunFam" id="3.30.450.20:FF:000037">
    <property type="entry name" value="Cell wall metabolism sensor histidine kinase"/>
    <property type="match status" value="1"/>
</dbReference>
<dbReference type="FunFam" id="3.30.565.10:FF:000006">
    <property type="entry name" value="Sensor histidine kinase WalK"/>
    <property type="match status" value="1"/>
</dbReference>
<dbReference type="FunFam" id="1.10.287.130:FF:000001">
    <property type="entry name" value="Two-component sensor histidine kinase"/>
    <property type="match status" value="1"/>
</dbReference>
<dbReference type="Gene3D" id="1.10.287.130">
    <property type="match status" value="1"/>
</dbReference>
<dbReference type="Gene3D" id="1.10.8.500">
    <property type="entry name" value="HAMP domain in histidine kinase"/>
    <property type="match status" value="1"/>
</dbReference>
<dbReference type="Gene3D" id="3.30.565.10">
    <property type="entry name" value="Histidine kinase-like ATPase, C-terminal domain"/>
    <property type="match status" value="1"/>
</dbReference>
<dbReference type="Gene3D" id="3.30.450.20">
    <property type="entry name" value="PAS domain"/>
    <property type="match status" value="2"/>
</dbReference>
<dbReference type="InterPro" id="IPR003660">
    <property type="entry name" value="HAMP_dom"/>
</dbReference>
<dbReference type="InterPro" id="IPR036890">
    <property type="entry name" value="HATPase_C_sf"/>
</dbReference>
<dbReference type="InterPro" id="IPR005467">
    <property type="entry name" value="His_kinase_dom"/>
</dbReference>
<dbReference type="InterPro" id="IPR003661">
    <property type="entry name" value="HisK_dim/P_dom"/>
</dbReference>
<dbReference type="InterPro" id="IPR036097">
    <property type="entry name" value="HisK_dim/P_sf"/>
</dbReference>
<dbReference type="InterPro" id="IPR052545">
    <property type="entry name" value="Light-responsive_reg"/>
</dbReference>
<dbReference type="InterPro" id="IPR000014">
    <property type="entry name" value="PAS"/>
</dbReference>
<dbReference type="InterPro" id="IPR000700">
    <property type="entry name" value="PAS-assoc_C"/>
</dbReference>
<dbReference type="InterPro" id="IPR035965">
    <property type="entry name" value="PAS-like_dom_sf"/>
</dbReference>
<dbReference type="InterPro" id="IPR049814">
    <property type="entry name" value="Resp_reg_WalK"/>
</dbReference>
<dbReference type="InterPro" id="IPR029151">
    <property type="entry name" value="Sensor-like_sf"/>
</dbReference>
<dbReference type="InterPro" id="IPR004358">
    <property type="entry name" value="Sig_transdc_His_kin-like_C"/>
</dbReference>
<dbReference type="NCBIfam" id="NF033092">
    <property type="entry name" value="HK_WalK"/>
    <property type="match status" value="1"/>
</dbReference>
<dbReference type="NCBIfam" id="TIGR00229">
    <property type="entry name" value="sensory_box"/>
    <property type="match status" value="1"/>
</dbReference>
<dbReference type="PANTHER" id="PTHR42878:SF7">
    <property type="entry name" value="SENSOR HISTIDINE KINASE GLRK"/>
    <property type="match status" value="1"/>
</dbReference>
<dbReference type="PANTHER" id="PTHR42878">
    <property type="entry name" value="TWO-COMPONENT HISTIDINE KINASE"/>
    <property type="match status" value="1"/>
</dbReference>
<dbReference type="Pfam" id="PF23846">
    <property type="entry name" value="Cache_WalK"/>
    <property type="match status" value="1"/>
</dbReference>
<dbReference type="Pfam" id="PF00672">
    <property type="entry name" value="HAMP"/>
    <property type="match status" value="1"/>
</dbReference>
<dbReference type="Pfam" id="PF02518">
    <property type="entry name" value="HATPase_c"/>
    <property type="match status" value="1"/>
</dbReference>
<dbReference type="Pfam" id="PF00512">
    <property type="entry name" value="HisKA"/>
    <property type="match status" value="1"/>
</dbReference>
<dbReference type="Pfam" id="PF13426">
    <property type="entry name" value="PAS_9"/>
    <property type="match status" value="1"/>
</dbReference>
<dbReference type="PRINTS" id="PR00344">
    <property type="entry name" value="BCTRLSENSOR"/>
</dbReference>
<dbReference type="SMART" id="SM00304">
    <property type="entry name" value="HAMP"/>
    <property type="match status" value="1"/>
</dbReference>
<dbReference type="SMART" id="SM00387">
    <property type="entry name" value="HATPase_c"/>
    <property type="match status" value="1"/>
</dbReference>
<dbReference type="SMART" id="SM00388">
    <property type="entry name" value="HisKA"/>
    <property type="match status" value="1"/>
</dbReference>
<dbReference type="SMART" id="SM00091">
    <property type="entry name" value="PAS"/>
    <property type="match status" value="1"/>
</dbReference>
<dbReference type="SUPFAM" id="SSF55874">
    <property type="entry name" value="ATPase domain of HSP90 chaperone/DNA topoisomerase II/histidine kinase"/>
    <property type="match status" value="1"/>
</dbReference>
<dbReference type="SUPFAM" id="SSF158472">
    <property type="entry name" value="HAMP domain-like"/>
    <property type="match status" value="1"/>
</dbReference>
<dbReference type="SUPFAM" id="SSF47384">
    <property type="entry name" value="Homodimeric domain of signal transducing histidine kinase"/>
    <property type="match status" value="1"/>
</dbReference>
<dbReference type="SUPFAM" id="SSF55785">
    <property type="entry name" value="PYP-like sensor domain (PAS domain)"/>
    <property type="match status" value="1"/>
</dbReference>
<dbReference type="SUPFAM" id="SSF103190">
    <property type="entry name" value="Sensory domain-like"/>
    <property type="match status" value="1"/>
</dbReference>
<dbReference type="PROSITE" id="PS50885">
    <property type="entry name" value="HAMP"/>
    <property type="match status" value="1"/>
</dbReference>
<dbReference type="PROSITE" id="PS50109">
    <property type="entry name" value="HIS_KIN"/>
    <property type="match status" value="1"/>
</dbReference>
<dbReference type="PROSITE" id="PS50113">
    <property type="entry name" value="PAC"/>
    <property type="match status" value="1"/>
</dbReference>
<dbReference type="PROSITE" id="PS50112">
    <property type="entry name" value="PAS"/>
    <property type="match status" value="1"/>
</dbReference>
<name>WALK_STAAW</name>
<reference key="1">
    <citation type="journal article" date="2002" name="Lancet">
        <title>Genome and virulence determinants of high virulence community-acquired MRSA.</title>
        <authorList>
            <person name="Baba T."/>
            <person name="Takeuchi F."/>
            <person name="Kuroda M."/>
            <person name="Yuzawa H."/>
            <person name="Aoki K."/>
            <person name="Oguchi A."/>
            <person name="Nagai Y."/>
            <person name="Iwama N."/>
            <person name="Asano K."/>
            <person name="Naimi T."/>
            <person name="Kuroda H."/>
            <person name="Cui L."/>
            <person name="Yamamoto K."/>
            <person name="Hiramatsu K."/>
        </authorList>
    </citation>
    <scope>NUCLEOTIDE SEQUENCE [LARGE SCALE GENOMIC DNA]</scope>
    <source>
        <strain>MW2</strain>
    </source>
</reference>
<evidence type="ECO:0000250" key="1">
    <source>
        <dbReference type="UniProtKB" id="O34206"/>
    </source>
</evidence>
<evidence type="ECO:0000250" key="2">
    <source>
        <dbReference type="UniProtKB" id="Q2G2U4"/>
    </source>
</evidence>
<evidence type="ECO:0000250" key="3">
    <source>
        <dbReference type="UniProtKB" id="Q9RDT3"/>
    </source>
</evidence>
<evidence type="ECO:0000255" key="4"/>
<evidence type="ECO:0000255" key="5">
    <source>
        <dbReference type="PROSITE-ProRule" id="PRU00102"/>
    </source>
</evidence>
<evidence type="ECO:0000255" key="6">
    <source>
        <dbReference type="PROSITE-ProRule" id="PRU00107"/>
    </source>
</evidence>
<evidence type="ECO:0000255" key="7">
    <source>
        <dbReference type="PROSITE-ProRule" id="PRU00140"/>
    </source>
</evidence>
<evidence type="ECO:0000255" key="8">
    <source>
        <dbReference type="PROSITE-ProRule" id="PRU00141"/>
    </source>
</evidence>
<evidence type="ECO:0000305" key="9"/>
<keyword id="KW-0067">ATP-binding</keyword>
<keyword id="KW-1003">Cell membrane</keyword>
<keyword id="KW-0418">Kinase</keyword>
<keyword id="KW-0472">Membrane</keyword>
<keyword id="KW-0479">Metal-binding</keyword>
<keyword id="KW-0547">Nucleotide-binding</keyword>
<keyword id="KW-0597">Phosphoprotein</keyword>
<keyword id="KW-0808">Transferase</keyword>
<keyword id="KW-0812">Transmembrane</keyword>
<keyword id="KW-1133">Transmembrane helix</keyword>
<keyword id="KW-0902">Two-component regulatory system</keyword>
<keyword id="KW-0862">Zinc</keyword>